<evidence type="ECO:0000255" key="1">
    <source>
        <dbReference type="HAMAP-Rule" id="MF_01433"/>
    </source>
</evidence>
<proteinExistence type="inferred from homology"/>
<dbReference type="EC" id="3.2.2.8" evidence="1"/>
<dbReference type="EMBL" id="CU928158">
    <property type="protein sequence ID" value="CAQ89750.1"/>
    <property type="molecule type" value="Genomic_DNA"/>
</dbReference>
<dbReference type="RefSeq" id="WP_000415422.1">
    <property type="nucleotide sequence ID" value="NC_011740.1"/>
</dbReference>
<dbReference type="SMR" id="B7LVC3"/>
<dbReference type="GeneID" id="75056720"/>
<dbReference type="KEGG" id="efe:EFER_2248"/>
<dbReference type="HOGENOM" id="CLU_036838_2_0_6"/>
<dbReference type="OrthoDB" id="9797882at2"/>
<dbReference type="Proteomes" id="UP000000745">
    <property type="component" value="Chromosome"/>
</dbReference>
<dbReference type="GO" id="GO:0005829">
    <property type="term" value="C:cytosol"/>
    <property type="evidence" value="ECO:0007669"/>
    <property type="project" value="TreeGrafter"/>
</dbReference>
<dbReference type="GO" id="GO:0005509">
    <property type="term" value="F:calcium ion binding"/>
    <property type="evidence" value="ECO:0007669"/>
    <property type="project" value="UniProtKB-UniRule"/>
</dbReference>
<dbReference type="GO" id="GO:0008477">
    <property type="term" value="F:purine nucleosidase activity"/>
    <property type="evidence" value="ECO:0007669"/>
    <property type="project" value="TreeGrafter"/>
</dbReference>
<dbReference type="GO" id="GO:0045437">
    <property type="term" value="F:uridine nucleosidase activity"/>
    <property type="evidence" value="ECO:0007669"/>
    <property type="project" value="UniProtKB-ARBA"/>
</dbReference>
<dbReference type="GO" id="GO:0006152">
    <property type="term" value="P:purine nucleoside catabolic process"/>
    <property type="evidence" value="ECO:0007669"/>
    <property type="project" value="TreeGrafter"/>
</dbReference>
<dbReference type="GO" id="GO:0006206">
    <property type="term" value="P:pyrimidine nucleobase metabolic process"/>
    <property type="evidence" value="ECO:0007669"/>
    <property type="project" value="UniProtKB-UniRule"/>
</dbReference>
<dbReference type="GO" id="GO:0046133">
    <property type="term" value="P:pyrimidine ribonucleoside catabolic process"/>
    <property type="evidence" value="ECO:0007669"/>
    <property type="project" value="InterPro"/>
</dbReference>
<dbReference type="CDD" id="cd02651">
    <property type="entry name" value="nuc_hydro_IU_UC_XIUA"/>
    <property type="match status" value="1"/>
</dbReference>
<dbReference type="FunFam" id="3.90.245.10:FF:000003">
    <property type="entry name" value="Pyrimidine-specific ribonucleoside hydrolase RihB"/>
    <property type="match status" value="1"/>
</dbReference>
<dbReference type="Gene3D" id="3.90.245.10">
    <property type="entry name" value="Ribonucleoside hydrolase-like"/>
    <property type="match status" value="1"/>
</dbReference>
<dbReference type="HAMAP" id="MF_01433">
    <property type="entry name" value="Pyrim_hydro_RihB"/>
    <property type="match status" value="1"/>
</dbReference>
<dbReference type="InterPro" id="IPR015910">
    <property type="entry name" value="I/U_nuclsd_hydro_CS"/>
</dbReference>
<dbReference type="InterPro" id="IPR001910">
    <property type="entry name" value="Inosine/uridine_hydrolase_dom"/>
</dbReference>
<dbReference type="InterPro" id="IPR023186">
    <property type="entry name" value="IUNH"/>
</dbReference>
<dbReference type="InterPro" id="IPR022977">
    <property type="entry name" value="Pyrim_hydro_RihB"/>
</dbReference>
<dbReference type="InterPro" id="IPR036452">
    <property type="entry name" value="Ribo_hydro-like"/>
</dbReference>
<dbReference type="NCBIfam" id="NF007417">
    <property type="entry name" value="PRK09955.1"/>
    <property type="match status" value="1"/>
</dbReference>
<dbReference type="PANTHER" id="PTHR12304">
    <property type="entry name" value="INOSINE-URIDINE PREFERRING NUCLEOSIDE HYDROLASE"/>
    <property type="match status" value="1"/>
</dbReference>
<dbReference type="PANTHER" id="PTHR12304:SF4">
    <property type="entry name" value="URIDINE NUCLEOSIDASE"/>
    <property type="match status" value="1"/>
</dbReference>
<dbReference type="Pfam" id="PF01156">
    <property type="entry name" value="IU_nuc_hydro"/>
    <property type="match status" value="1"/>
</dbReference>
<dbReference type="SUPFAM" id="SSF53590">
    <property type="entry name" value="Nucleoside hydrolase"/>
    <property type="match status" value="1"/>
</dbReference>
<dbReference type="PROSITE" id="PS01247">
    <property type="entry name" value="IUNH"/>
    <property type="match status" value="1"/>
</dbReference>
<keyword id="KW-0106">Calcium</keyword>
<keyword id="KW-0326">Glycosidase</keyword>
<keyword id="KW-0378">Hydrolase</keyword>
<keyword id="KW-0479">Metal-binding</keyword>
<reference key="1">
    <citation type="journal article" date="2009" name="PLoS Genet.">
        <title>Organised genome dynamics in the Escherichia coli species results in highly diverse adaptive paths.</title>
        <authorList>
            <person name="Touchon M."/>
            <person name="Hoede C."/>
            <person name="Tenaillon O."/>
            <person name="Barbe V."/>
            <person name="Baeriswyl S."/>
            <person name="Bidet P."/>
            <person name="Bingen E."/>
            <person name="Bonacorsi S."/>
            <person name="Bouchier C."/>
            <person name="Bouvet O."/>
            <person name="Calteau A."/>
            <person name="Chiapello H."/>
            <person name="Clermont O."/>
            <person name="Cruveiller S."/>
            <person name="Danchin A."/>
            <person name="Diard M."/>
            <person name="Dossat C."/>
            <person name="Karoui M.E."/>
            <person name="Frapy E."/>
            <person name="Garry L."/>
            <person name="Ghigo J.M."/>
            <person name="Gilles A.M."/>
            <person name="Johnson J."/>
            <person name="Le Bouguenec C."/>
            <person name="Lescat M."/>
            <person name="Mangenot S."/>
            <person name="Martinez-Jehanne V."/>
            <person name="Matic I."/>
            <person name="Nassif X."/>
            <person name="Oztas S."/>
            <person name="Petit M.A."/>
            <person name="Pichon C."/>
            <person name="Rouy Z."/>
            <person name="Ruf C.S."/>
            <person name="Schneider D."/>
            <person name="Tourret J."/>
            <person name="Vacherie B."/>
            <person name="Vallenet D."/>
            <person name="Medigue C."/>
            <person name="Rocha E.P.C."/>
            <person name="Denamur E."/>
        </authorList>
    </citation>
    <scope>NUCLEOTIDE SEQUENCE [LARGE SCALE GENOMIC DNA]</scope>
    <source>
        <strain>ATCC 35469 / DSM 13698 / BCRC 15582 / CCUG 18766 / IAM 14443 / JCM 21226 / LMG 7866 / NBRC 102419 / NCTC 12128 / CDC 0568-73</strain>
    </source>
</reference>
<organism>
    <name type="scientific">Escherichia fergusonii (strain ATCC 35469 / DSM 13698 / CCUG 18766 / IAM 14443 / JCM 21226 / LMG 7866 / NBRC 102419 / NCTC 12128 / CDC 0568-73)</name>
    <dbReference type="NCBI Taxonomy" id="585054"/>
    <lineage>
        <taxon>Bacteria</taxon>
        <taxon>Pseudomonadati</taxon>
        <taxon>Pseudomonadota</taxon>
        <taxon>Gammaproteobacteria</taxon>
        <taxon>Enterobacterales</taxon>
        <taxon>Enterobacteriaceae</taxon>
        <taxon>Escherichia</taxon>
    </lineage>
</organism>
<accession>B7LVC3</accession>
<feature type="chain" id="PRO_1000145835" description="Pyrimidine-specific ribonucleoside hydrolase RihB">
    <location>
        <begin position="1"/>
        <end position="313"/>
    </location>
</feature>
<feature type="active site" description="Proton acceptor" evidence="1">
    <location>
        <position position="11"/>
    </location>
</feature>
<feature type="binding site" evidence="1">
    <location>
        <position position="11"/>
    </location>
    <ligand>
        <name>Ca(2+)</name>
        <dbReference type="ChEBI" id="CHEBI:29108"/>
    </ligand>
</feature>
<feature type="binding site" evidence="1">
    <location>
        <position position="16"/>
    </location>
    <ligand>
        <name>Ca(2+)</name>
        <dbReference type="ChEBI" id="CHEBI:29108"/>
    </ligand>
</feature>
<feature type="binding site" evidence="1">
    <location>
        <position position="124"/>
    </location>
    <ligand>
        <name>Ca(2+)</name>
        <dbReference type="ChEBI" id="CHEBI:29108"/>
    </ligand>
</feature>
<feature type="binding site" evidence="1">
    <location>
        <position position="227"/>
    </location>
    <ligand>
        <name>substrate</name>
    </ligand>
</feature>
<feature type="binding site" evidence="1">
    <location>
        <position position="239"/>
    </location>
    <ligand>
        <name>substrate</name>
    </ligand>
</feature>
<feature type="binding site" evidence="1">
    <location>
        <position position="240"/>
    </location>
    <ligand>
        <name>Ca(2+)</name>
        <dbReference type="ChEBI" id="CHEBI:29108"/>
    </ligand>
</feature>
<name>RIHB_ESCF3</name>
<gene>
    <name evidence="1" type="primary">rihB</name>
    <name type="ordered locus">EFER_2248</name>
</gene>
<comment type="function">
    <text evidence="1">Hydrolyzes cytidine or uridine to ribose and cytosine or uracil, respectively. Has a clear preference for cytidine over uridine. Strictly specific for ribonucleosides.</text>
</comment>
<comment type="catalytic activity">
    <reaction evidence="1">
        <text>a pyrimidine ribonucleoside + H2O = a pyrimidine nucleobase + D-ribose</text>
        <dbReference type="Rhea" id="RHEA:56816"/>
        <dbReference type="ChEBI" id="CHEBI:15377"/>
        <dbReference type="ChEBI" id="CHEBI:26432"/>
        <dbReference type="ChEBI" id="CHEBI:47013"/>
        <dbReference type="ChEBI" id="CHEBI:141014"/>
        <dbReference type="EC" id="3.2.2.8"/>
    </reaction>
</comment>
<comment type="cofactor">
    <cofactor evidence="1">
        <name>Ca(2+)</name>
        <dbReference type="ChEBI" id="CHEBI:29108"/>
    </cofactor>
    <text evidence="1">Binds 1 Ca(2+) ion per monomer.</text>
</comment>
<comment type="subunit">
    <text evidence="1">Homotetramer.</text>
</comment>
<comment type="similarity">
    <text evidence="1">Belongs to the IUNH family. RihB subfamily.</text>
</comment>
<sequence length="313" mass="33775">MEKRKIILDCDPGHDDAIAIMMAAKHPAIDLLGITIVAGNQTLDKTLINGLNVCQKLEINVPVYAGMPQPIMRQQIVADNIHGETGLDGPVFEPLTRQAENTHAVKYIIDTLMASDGDITLVPVGPLSNIAVAMRMQPAILPKIREIVLMGGAYGTGNFTPSAEFNIFADPEAARVVFTSGVPLVMMGLDLTNQTVCTPDVIARMERAGGPAGELFSDIMNFTLKTQFENYGLAGGPVHDATCIGYLINPDGIKTQEMYVEVDVNSGPCYGRTVCDELGVLGKPANTKVGITIDTDWFWGLVEECVRGYIKTH</sequence>
<protein>
    <recommendedName>
        <fullName evidence="1">Pyrimidine-specific ribonucleoside hydrolase RihB</fullName>
        <ecNumber evidence="1">3.2.2.8</ecNumber>
    </recommendedName>
    <alternativeName>
        <fullName evidence="1">Cytidine/uridine-specific hydrolase</fullName>
    </alternativeName>
</protein>